<dbReference type="EC" id="1.2.4.-" evidence="1"/>
<dbReference type="EMBL" id="BC086742">
    <property type="protein sequence ID" value="AAH86742.1"/>
    <property type="status" value="ALT_INIT"/>
    <property type="molecule type" value="mRNA"/>
</dbReference>
<dbReference type="RefSeq" id="NP_001008619.1">
    <property type="nucleotide sequence ID" value="NM_001008619.1"/>
</dbReference>
<dbReference type="SMR" id="Q5PRA2"/>
<dbReference type="FunCoup" id="Q5PRA2">
    <property type="interactions" value="381"/>
</dbReference>
<dbReference type="STRING" id="7955.ENSDARP00000025776"/>
<dbReference type="PaxDb" id="7955-ENSDARP00000025776"/>
<dbReference type="GeneID" id="494076"/>
<dbReference type="KEGG" id="dre:494076"/>
<dbReference type="AGR" id="ZFIN:ZDB-GENE-041212-44"/>
<dbReference type="CTD" id="55526"/>
<dbReference type="ZFIN" id="ZDB-GENE-041212-44">
    <property type="gene designation" value="dhtkd1"/>
</dbReference>
<dbReference type="eggNOG" id="KOG0451">
    <property type="taxonomic scope" value="Eukaryota"/>
</dbReference>
<dbReference type="InParanoid" id="Q5PRA2"/>
<dbReference type="OrthoDB" id="413077at2759"/>
<dbReference type="PhylomeDB" id="Q5PRA2"/>
<dbReference type="Reactome" id="R-DRE-9858328">
    <property type="pathway name" value="OADH complex synthesizes glutaryl-CoA from 2-OA"/>
</dbReference>
<dbReference type="PRO" id="PR:Q5PRA2"/>
<dbReference type="Proteomes" id="UP000000437">
    <property type="component" value="Alternate scaffold 25"/>
</dbReference>
<dbReference type="Proteomes" id="UP000000437">
    <property type="component" value="Chromosome 25"/>
</dbReference>
<dbReference type="GO" id="GO:0005739">
    <property type="term" value="C:mitochondrion"/>
    <property type="evidence" value="ECO:0007669"/>
    <property type="project" value="UniProtKB-SubCell"/>
</dbReference>
<dbReference type="GO" id="GO:0160166">
    <property type="term" value="F:2-oxoadipate dehydrogenase activity"/>
    <property type="evidence" value="ECO:0007669"/>
    <property type="project" value="RHEA"/>
</dbReference>
<dbReference type="GO" id="GO:0004591">
    <property type="term" value="F:oxoglutarate dehydrogenase (succinyl-transferring) activity"/>
    <property type="evidence" value="ECO:0007669"/>
    <property type="project" value="UniProtKB-EC"/>
</dbReference>
<dbReference type="GO" id="GO:0030976">
    <property type="term" value="F:thiamine pyrophosphate binding"/>
    <property type="evidence" value="ECO:0007669"/>
    <property type="project" value="InterPro"/>
</dbReference>
<dbReference type="GO" id="GO:0006096">
    <property type="term" value="P:glycolytic process"/>
    <property type="evidence" value="ECO:0007669"/>
    <property type="project" value="UniProtKB-KW"/>
</dbReference>
<dbReference type="CDD" id="cd02016">
    <property type="entry name" value="TPP_E1_OGDC_like"/>
    <property type="match status" value="1"/>
</dbReference>
<dbReference type="FunFam" id="3.40.50.970:FF:000034">
    <property type="entry name" value="Probable 2-oxoglutarate dehydrogenase E1 component DHKTD1, mitochondrial"/>
    <property type="match status" value="1"/>
</dbReference>
<dbReference type="FunFam" id="1.10.287.1150:FF:000005">
    <property type="entry name" value="probable 2-oxoglutarate dehydrogenase E1 component DHKTD1, mitochondrial"/>
    <property type="match status" value="1"/>
</dbReference>
<dbReference type="Gene3D" id="3.40.50.12470">
    <property type="match status" value="1"/>
</dbReference>
<dbReference type="Gene3D" id="3.40.50.970">
    <property type="match status" value="1"/>
</dbReference>
<dbReference type="Gene3D" id="3.40.50.11610">
    <property type="entry name" value="Multifunctional 2-oxoglutarate metabolism enzyme, C-terminal domain"/>
    <property type="match status" value="1"/>
</dbReference>
<dbReference type="Gene3D" id="1.10.287.1150">
    <property type="entry name" value="TPP helical domain"/>
    <property type="match status" value="1"/>
</dbReference>
<dbReference type="InterPro" id="IPR011603">
    <property type="entry name" value="2oxoglutarate_DH_E1"/>
</dbReference>
<dbReference type="InterPro" id="IPR001017">
    <property type="entry name" value="DH_E1"/>
</dbReference>
<dbReference type="InterPro" id="IPR042179">
    <property type="entry name" value="KGD_C_sf"/>
</dbReference>
<dbReference type="InterPro" id="IPR031717">
    <property type="entry name" value="ODO-1/KGD_C"/>
</dbReference>
<dbReference type="InterPro" id="IPR029061">
    <property type="entry name" value="THDP-binding"/>
</dbReference>
<dbReference type="InterPro" id="IPR005475">
    <property type="entry name" value="Transketolase-like_Pyr-bd"/>
</dbReference>
<dbReference type="NCBIfam" id="TIGR00239">
    <property type="entry name" value="2oxo_dh_E1"/>
    <property type="match status" value="1"/>
</dbReference>
<dbReference type="NCBIfam" id="NF006914">
    <property type="entry name" value="PRK09404.1"/>
    <property type="match status" value="1"/>
</dbReference>
<dbReference type="NCBIfam" id="NF008907">
    <property type="entry name" value="PRK12270.1"/>
    <property type="match status" value="1"/>
</dbReference>
<dbReference type="PANTHER" id="PTHR23152:SF4">
    <property type="entry name" value="2-OXOADIPATE DEHYDROGENASE COMPLEX COMPONENT E1"/>
    <property type="match status" value="1"/>
</dbReference>
<dbReference type="PANTHER" id="PTHR23152">
    <property type="entry name" value="2-OXOGLUTARATE DEHYDROGENASE"/>
    <property type="match status" value="1"/>
</dbReference>
<dbReference type="Pfam" id="PF00676">
    <property type="entry name" value="E1_dh"/>
    <property type="match status" value="1"/>
</dbReference>
<dbReference type="Pfam" id="PF16870">
    <property type="entry name" value="OxoGdeHyase_C"/>
    <property type="match status" value="1"/>
</dbReference>
<dbReference type="Pfam" id="PF02779">
    <property type="entry name" value="Transket_pyr"/>
    <property type="match status" value="1"/>
</dbReference>
<dbReference type="PIRSF" id="PIRSF000157">
    <property type="entry name" value="Oxoglu_dh_E1"/>
    <property type="match status" value="1"/>
</dbReference>
<dbReference type="SMART" id="SM00861">
    <property type="entry name" value="Transket_pyr"/>
    <property type="match status" value="1"/>
</dbReference>
<dbReference type="SUPFAM" id="SSF52518">
    <property type="entry name" value="Thiamin diphosphate-binding fold (THDP-binding)"/>
    <property type="match status" value="2"/>
</dbReference>
<feature type="transit peptide" description="Mitochondrion" evidence="2">
    <location>
        <begin position="1"/>
        <end status="unknown"/>
    </location>
</feature>
<feature type="chain" id="PRO_0000307940" description="2-oxoadipate dehydrogenase complex component E1">
    <location>
        <begin status="unknown"/>
        <end position="920"/>
    </location>
</feature>
<feature type="region of interest" description="Disordered" evidence="3">
    <location>
        <begin position="299"/>
        <end position="322"/>
    </location>
</feature>
<feature type="compositionally biased region" description="Basic and acidic residues" evidence="3">
    <location>
        <begin position="308"/>
        <end position="322"/>
    </location>
</feature>
<sequence length="920" mass="102964">MLIHLPRLLHRSFGARRSFLASLYHTQRGVYGFRPRDGPERRAELTQISALNRDHGLARLVEAYRAHGHKVAKINPLLPQSPVLESVPEISLLNGAVRGVLNTTGLRHFGKAEATAEEVVAYLESTYCGGISVETSQLQTLEEREWFADRFEELKKEAFSPEERRMLAKLMLESQEFDHFLATKFATVKRYGGEGAESMMGFFYELFRSSVYSGVTDVVMGMPHRGRLNLLTGLLQFPPELMFRKMRGLSEFPEHSPSIGDVLSHLTSTVELDFGAGHPLHVTMLPNPSHLEAINPVTQGKTRGRQQVKQDGDYSTDPHSRPGDKVICLQVHGDASFSGQGIVPETFTLSNLPHYRVGGSIHLIVNNQVGYTTPSERGRSSLYCSDVGKMVGCAIIHVNGDDAEEVLRATRLAVEYQRRFRKDVIVDLLCYRQWGHNELDEPFFTNPAMYKIIRSRKSIPDSYADQLISEGLMTDEERSQIKTSYYATLNNQLTNMTLYSPPPTNLQGRWGDLVEPQNRVSCWDTGVAQPLLQFVGAKSVDIPEEIILHSHLRKTHVQARLQKLEEGTKLDWSTAEALAFGTLLCQGFNIRISGQDVGRGTFSQRHAMVVCQETNDMFIPLNHISSEQKGHLEVCNSALSEEAVLGFEYGMSIAQPRLLPIWEAQFGDFFNGAQIIFDTFLSGGEAKWLLQSGLVILLPHGYDGAGPEHSSCRIERFLQLCDSKEEGVDGDTVNMAVVNPTLPAQYFHLLRRQMIRNFRKPLIVASPKTLLRFSGAVSGLSDMGPGTSFKPIIGDSSVNPASVQRVLFCSGKHYYALLKHRETIPEAEKNTALVRVEELCPFPTEALQQELNKYTNAKEFIWSQEEPQNMGCWSFVSPRFEKQLACKLRLVSRPALPAPAVGIGTLHHQQHEAILTSSFS</sequence>
<accession>Q5PRA2</accession>
<gene>
    <name type="primary">dhtkd1</name>
    <name type="ORF">zgc:101818</name>
</gene>
<comment type="function">
    <text evidence="1">2-oxoadipate dehydrogenase (E1a) component of the 2-oxoadipate dehydrogenase complex (OADHC). Participates in the first step, rate limiting for the overall conversion of 2-oxoadipate (alpha-ketoadipate) to glutaryl-CoA and CO(2) catalyzed by the whole OADHC. Catalyzes the irreversible decarboxylation of 2-oxoadipate via the thiamine diphosphate (ThDP) cofactor and subsequent transfer of the decarboxylated acyl intermediate on an oxidized dihydrolipoyl group that is covalently amidated to the E2 enzyme (dihydrolipoyllysine-residue succinyltransferase or DLST). Can catalyze the decarboxylation of 2-oxoglutarate in vitro, but at a much lower rate than 2-oxoadipate. Responsible for the last step of L-lysine, L-hydroxylysine and L-tryptophan catabolism with the common product being 2-oxoadipate.</text>
</comment>
<comment type="catalytic activity">
    <reaction evidence="1">
        <text>N(6)-[(R)-lipoyl]-L-lysyl-[protein] + 2-oxoadipate + H(+) = N(6)-[(R)-S(8)-glutaryldihydrolipoyl]-L-lysyl-[protein] + CO2</text>
        <dbReference type="Rhea" id="RHEA:69576"/>
        <dbReference type="Rhea" id="RHEA-COMP:10474"/>
        <dbReference type="Rhea" id="RHEA-COMP:20093"/>
        <dbReference type="ChEBI" id="CHEBI:15378"/>
        <dbReference type="ChEBI" id="CHEBI:16526"/>
        <dbReference type="ChEBI" id="CHEBI:57499"/>
        <dbReference type="ChEBI" id="CHEBI:83099"/>
        <dbReference type="ChEBI" id="CHEBI:184385"/>
    </reaction>
    <physiologicalReaction direction="left-to-right" evidence="1">
        <dbReference type="Rhea" id="RHEA:69577"/>
    </physiologicalReaction>
</comment>
<comment type="cofactor">
    <cofactor evidence="1">
        <name>thiamine diphosphate</name>
        <dbReference type="ChEBI" id="CHEBI:58937"/>
    </cofactor>
</comment>
<comment type="pathway">
    <text evidence="1">Amino-acid degradation.</text>
</comment>
<comment type="subunit">
    <text evidence="1">The 2-oxoadipate dehydrogenase complex is composed of OADH (2-oxoadipate dehydrogenase; E1a), DLST (dihydrolipoamide succinyltransferase; E2) and DLD (dihydrolipoamide dehydrogenase; E3). E1a functional unit is a dimer.</text>
</comment>
<comment type="subcellular location">
    <subcellularLocation>
        <location evidence="1">Mitochondrion</location>
    </subcellularLocation>
</comment>
<comment type="miscellaneous">
    <text evidence="1">The mitochondrial 2-oxoglutarate and 2-oxoadipate dehydrogenase complexes (OGDHC and OADHC, respectively) share their E2 (DLST) and E3 (dihydrolipoyl dehydrogenase or DLD) components, but the E1 component is specific to each complex (E1o and E1a, respectively).</text>
</comment>
<comment type="similarity">
    <text evidence="1">Belongs to the alpha-ketoglutarate dehydrogenase family.</text>
</comment>
<comment type="sequence caution" evidence="4">
    <conflict type="erroneous initiation">
        <sequence resource="EMBL-CDS" id="AAH86742"/>
    </conflict>
</comment>
<organism>
    <name type="scientific">Danio rerio</name>
    <name type="common">Zebrafish</name>
    <name type="synonym">Brachydanio rerio</name>
    <dbReference type="NCBI Taxonomy" id="7955"/>
    <lineage>
        <taxon>Eukaryota</taxon>
        <taxon>Metazoa</taxon>
        <taxon>Chordata</taxon>
        <taxon>Craniata</taxon>
        <taxon>Vertebrata</taxon>
        <taxon>Euteleostomi</taxon>
        <taxon>Actinopterygii</taxon>
        <taxon>Neopterygii</taxon>
        <taxon>Teleostei</taxon>
        <taxon>Ostariophysi</taxon>
        <taxon>Cypriniformes</taxon>
        <taxon>Danionidae</taxon>
        <taxon>Danioninae</taxon>
        <taxon>Danio</taxon>
    </lineage>
</organism>
<name>DHTK1_DANRE</name>
<keyword id="KW-0324">Glycolysis</keyword>
<keyword id="KW-0496">Mitochondrion</keyword>
<keyword id="KW-0560">Oxidoreductase</keyword>
<keyword id="KW-1185">Reference proteome</keyword>
<keyword id="KW-0786">Thiamine pyrophosphate</keyword>
<keyword id="KW-0809">Transit peptide</keyword>
<proteinExistence type="evidence at transcript level"/>
<protein>
    <recommendedName>
        <fullName>2-oxoadipate dehydrogenase complex component E1</fullName>
        <shortName evidence="1">E1a</shortName>
        <shortName>OADC-E1</shortName>
        <shortName>OADH-E1</shortName>
        <ecNumber evidence="1">1.2.4.-</ecNumber>
    </recommendedName>
    <alternativeName>
        <fullName>2-oxoadipate dehydrogenase, mitochondrial</fullName>
    </alternativeName>
    <alternativeName>
        <fullName>Alpha-ketoadipate dehydrogenase</fullName>
        <shortName>Alpha-KADH-E1</shortName>
    </alternativeName>
    <alternativeName>
        <fullName>Dehydrogenase E1 and transketolase domain-containing protein 1</fullName>
    </alternativeName>
    <alternativeName>
        <fullName>Probable 2-oxoglutarate dehydrogenase E1 component DHKTD1, mitochondrial</fullName>
    </alternativeName>
</protein>
<reference key="1">
    <citation type="submission" date="2004-12" db="EMBL/GenBank/DDBJ databases">
        <authorList>
            <consortium name="NIH - Zebrafish Gene Collection (ZGC) project"/>
        </authorList>
    </citation>
    <scope>NUCLEOTIDE SEQUENCE [LARGE SCALE MRNA]</scope>
    <source>
        <tissue>Olfactory epithelium</tissue>
    </source>
</reference>
<evidence type="ECO:0000250" key="1">
    <source>
        <dbReference type="UniProtKB" id="Q96HY7"/>
    </source>
</evidence>
<evidence type="ECO:0000255" key="2"/>
<evidence type="ECO:0000256" key="3">
    <source>
        <dbReference type="SAM" id="MobiDB-lite"/>
    </source>
</evidence>
<evidence type="ECO:0000305" key="4"/>